<name>YNI1_FRAAL</name>
<sequence length="82" mass="9081">MTPEPPAPDTASRDAENLDAAAAQQRLRKLHSKATRLKLDLHDLAEDLPIGWEGLLDVARRTYDAYAEIALLEGLAEKETSR</sequence>
<keyword id="KW-0535">Nitrogen fixation</keyword>
<comment type="similarity">
    <text evidence="1">Belongs to the UPF0437 family.</text>
</comment>
<reference key="1">
    <citation type="journal article" date="1995" name="Gene">
        <title>Sequences of nifX, nifW, nifZ, nifB and two ORF in the Frankia nitrogen fixation gene cluster.</title>
        <authorList>
            <person name="Harriott O.T."/>
            <person name="Hosted T.J."/>
            <person name="Benson D.R."/>
        </authorList>
    </citation>
    <scope>NUCLEOTIDE SEQUENCE [GENOMIC DNA]</scope>
    <source>
        <strain>CpI1</strain>
    </source>
</reference>
<evidence type="ECO:0000305" key="1"/>
<organism>
    <name type="scientific">Frankia alni</name>
    <dbReference type="NCBI Taxonomy" id="1859"/>
    <lineage>
        <taxon>Bacteria</taxon>
        <taxon>Bacillati</taxon>
        <taxon>Actinomycetota</taxon>
        <taxon>Actinomycetes</taxon>
        <taxon>Frankiales</taxon>
        <taxon>Frankiaceae</taxon>
        <taxon>Frankia</taxon>
    </lineage>
</organism>
<accession>P46041</accession>
<feature type="chain" id="PRO_0000066326" description="UPF0437 protein in nifX-nifW intergenic region">
    <location>
        <begin position="1"/>
        <end position="82"/>
    </location>
</feature>
<protein>
    <recommendedName>
        <fullName>UPF0437 protein in nifX-nifW intergenic region</fullName>
    </recommendedName>
    <alternativeName>
        <fullName>ORF1</fullName>
    </alternativeName>
</protein>
<dbReference type="EMBL" id="L29299">
    <property type="protein sequence ID" value="AAC82972.1"/>
    <property type="molecule type" value="Genomic_DNA"/>
</dbReference>
<dbReference type="PIR" id="T09234">
    <property type="entry name" value="T09234"/>
</dbReference>
<dbReference type="SMR" id="P46041"/>
<dbReference type="GO" id="GO:0009399">
    <property type="term" value="P:nitrogen fixation"/>
    <property type="evidence" value="ECO:0007669"/>
    <property type="project" value="UniProtKB-KW"/>
</dbReference>
<dbReference type="Gene3D" id="1.10.287.660">
    <property type="entry name" value="Helix hairpin bin"/>
    <property type="match status" value="1"/>
</dbReference>
<dbReference type="InterPro" id="IPR029012">
    <property type="entry name" value="Helix_hairpin_bin_sf"/>
</dbReference>
<dbReference type="InterPro" id="IPR007774">
    <property type="entry name" value="Put_N_fixation"/>
</dbReference>
<dbReference type="Pfam" id="PF05082">
    <property type="entry name" value="Rop-like"/>
    <property type="match status" value="1"/>
</dbReference>
<proteinExistence type="inferred from homology"/>